<name>MDTC_SALHS</name>
<feature type="chain" id="PRO_1000145681" description="Multidrug resistance protein MdtC">
    <location>
        <begin position="1"/>
        <end position="1026"/>
    </location>
</feature>
<feature type="transmembrane region" description="Helical" evidence="1">
    <location>
        <begin position="15"/>
        <end position="35"/>
    </location>
</feature>
<feature type="transmembrane region" description="Helical" evidence="1">
    <location>
        <begin position="333"/>
        <end position="353"/>
    </location>
</feature>
<feature type="transmembrane region" description="Helical" evidence="1">
    <location>
        <begin position="360"/>
        <end position="380"/>
    </location>
</feature>
<feature type="transmembrane region" description="Helical" evidence="1">
    <location>
        <begin position="387"/>
        <end position="407"/>
    </location>
</feature>
<feature type="transmembrane region" description="Helical" evidence="1">
    <location>
        <begin position="431"/>
        <end position="451"/>
    </location>
</feature>
<feature type="transmembrane region" description="Helical" evidence="1">
    <location>
        <begin position="463"/>
        <end position="483"/>
    </location>
</feature>
<feature type="transmembrane region" description="Helical" evidence="1">
    <location>
        <begin position="528"/>
        <end position="548"/>
    </location>
</feature>
<feature type="transmembrane region" description="Helical" evidence="1">
    <location>
        <begin position="853"/>
        <end position="873"/>
    </location>
</feature>
<feature type="transmembrane region" description="Helical" evidence="1">
    <location>
        <begin position="897"/>
        <end position="917"/>
    </location>
</feature>
<feature type="transmembrane region" description="Helical" evidence="1">
    <location>
        <begin position="953"/>
        <end position="973"/>
    </location>
</feature>
<feature type="transmembrane region" description="Helical" evidence="1">
    <location>
        <begin position="984"/>
        <end position="1004"/>
    </location>
</feature>
<dbReference type="EMBL" id="CP001120">
    <property type="protein sequence ID" value="ACF66623.1"/>
    <property type="molecule type" value="Genomic_DNA"/>
</dbReference>
<dbReference type="RefSeq" id="WP_001210104.1">
    <property type="nucleotide sequence ID" value="NC_011083.1"/>
</dbReference>
<dbReference type="SMR" id="B4T9U2"/>
<dbReference type="KEGG" id="seh:SeHA_C2358"/>
<dbReference type="HOGENOM" id="CLU_002755_1_2_6"/>
<dbReference type="Proteomes" id="UP000001866">
    <property type="component" value="Chromosome"/>
</dbReference>
<dbReference type="GO" id="GO:0005886">
    <property type="term" value="C:plasma membrane"/>
    <property type="evidence" value="ECO:0007669"/>
    <property type="project" value="UniProtKB-SubCell"/>
</dbReference>
<dbReference type="GO" id="GO:0042910">
    <property type="term" value="F:xenobiotic transmembrane transporter activity"/>
    <property type="evidence" value="ECO:0007669"/>
    <property type="project" value="TreeGrafter"/>
</dbReference>
<dbReference type="FunFam" id="1.20.1640.10:FF:000001">
    <property type="entry name" value="Efflux pump membrane transporter"/>
    <property type="match status" value="1"/>
</dbReference>
<dbReference type="FunFam" id="3.30.70.1430:FF:000001">
    <property type="entry name" value="Efflux pump membrane transporter"/>
    <property type="match status" value="1"/>
</dbReference>
<dbReference type="FunFam" id="3.30.2090.10:FF:000004">
    <property type="entry name" value="Multidrug resistance protein MdtC"/>
    <property type="match status" value="1"/>
</dbReference>
<dbReference type="FunFam" id="3.30.2090.10:FF:000005">
    <property type="entry name" value="Multidrug resistance protein MdtC"/>
    <property type="match status" value="1"/>
</dbReference>
<dbReference type="FunFam" id="3.30.70.1430:FF:000004">
    <property type="entry name" value="Multidrug resistance protein MdtC"/>
    <property type="match status" value="1"/>
</dbReference>
<dbReference type="Gene3D" id="3.30.70.1430">
    <property type="entry name" value="Multidrug efflux transporter AcrB pore domain"/>
    <property type="match status" value="2"/>
</dbReference>
<dbReference type="Gene3D" id="3.30.70.1440">
    <property type="entry name" value="Multidrug efflux transporter AcrB pore domain"/>
    <property type="match status" value="1"/>
</dbReference>
<dbReference type="Gene3D" id="3.30.70.1320">
    <property type="entry name" value="Multidrug efflux transporter AcrB pore domain like"/>
    <property type="match status" value="1"/>
</dbReference>
<dbReference type="Gene3D" id="3.30.2090.10">
    <property type="entry name" value="Multidrug efflux transporter AcrB TolC docking domain, DN and DC subdomains"/>
    <property type="match status" value="2"/>
</dbReference>
<dbReference type="Gene3D" id="1.20.1640.10">
    <property type="entry name" value="Multidrug efflux transporter AcrB transmembrane domain"/>
    <property type="match status" value="2"/>
</dbReference>
<dbReference type="HAMAP" id="MF_01424">
    <property type="entry name" value="MdtC"/>
    <property type="match status" value="1"/>
</dbReference>
<dbReference type="InterPro" id="IPR027463">
    <property type="entry name" value="AcrB_DN_DC_subdom"/>
</dbReference>
<dbReference type="InterPro" id="IPR001036">
    <property type="entry name" value="Acrflvin-R"/>
</dbReference>
<dbReference type="InterPro" id="IPR023931">
    <property type="entry name" value="Multidrug-R_MdtC"/>
</dbReference>
<dbReference type="NCBIfam" id="NF007905">
    <property type="entry name" value="PRK10614.1"/>
    <property type="match status" value="1"/>
</dbReference>
<dbReference type="NCBIfam" id="NF033617">
    <property type="entry name" value="RND_permease_2"/>
    <property type="match status" value="1"/>
</dbReference>
<dbReference type="PANTHER" id="PTHR32063">
    <property type="match status" value="1"/>
</dbReference>
<dbReference type="PANTHER" id="PTHR32063:SF34">
    <property type="entry name" value="MULTIDRUG RESISTANCE PROTEIN MDTC"/>
    <property type="match status" value="1"/>
</dbReference>
<dbReference type="Pfam" id="PF00873">
    <property type="entry name" value="ACR_tran"/>
    <property type="match status" value="1"/>
</dbReference>
<dbReference type="PRINTS" id="PR00702">
    <property type="entry name" value="ACRIFLAVINRP"/>
</dbReference>
<dbReference type="SUPFAM" id="SSF82693">
    <property type="entry name" value="Multidrug efflux transporter AcrB pore domain, PN1, PN2, PC1 and PC2 subdomains"/>
    <property type="match status" value="4"/>
</dbReference>
<dbReference type="SUPFAM" id="SSF82714">
    <property type="entry name" value="Multidrug efflux transporter AcrB TolC docking domain, DN and DC subdomains"/>
    <property type="match status" value="2"/>
</dbReference>
<dbReference type="SUPFAM" id="SSF82866">
    <property type="entry name" value="Multidrug efflux transporter AcrB transmembrane domain"/>
    <property type="match status" value="2"/>
</dbReference>
<comment type="subunit">
    <text evidence="1">Part of a tripartite efflux system composed of MdtA, MdtB and MdtC. MdtC forms a heteromultimer with MdtB.</text>
</comment>
<comment type="subcellular location">
    <subcellularLocation>
        <location evidence="1">Cell inner membrane</location>
        <topology evidence="1">Multi-pass membrane protein</topology>
    </subcellularLocation>
</comment>
<comment type="similarity">
    <text evidence="1">Belongs to the resistance-nodulation-cell division (RND) (TC 2.A.6) family. MdtC subfamily.</text>
</comment>
<sequence>MRFFALFIYRPVATILIAAAITLCGILGFRLLPVAPLPQVDFPVIMVSASLPGASPETMASSVATPLERSLGRIAGVNEMTSSSSLGSTRIILEFNFDRDINGAARDVQAAINAAQSLLPGGMPSRPTYRRANPSDAPIMILTLTSESWSQGKLYDFASTQLAQTIAQIDGVGDVDVGGSSLPAVRVGLNPQALFNQGVSLDEVREAIDSANVRRPQGAIEDSVHRWQIQTNDELKTAAEYQPLIIHYNNGAAVRLGDVASVTDSVQDVRNAGMTNAKPAILLMIRKLPEANIIQTVDGIRAKLPELRAMIPAAIDLQIAQDRSPTIRASLQEVEETLAISVALVILVVFLFLRSGRATLIPAVAVPVSLIGTFAAMYLCGFSLNNLSLMALTIATGFVVDDAIVVLENIARHLEAGMKPLQAALQGTREVGFTVISMSLSLVAVFLPLLLMGGLPGRLLREFAVTLSVAIGISLVVSLTLTPMMCGWMLKSSKPRTQLRKRGVGRLLVALQQGYGTSLKWVLNHTRLVGVVFLGTVALNIWLYIAIPKTFFPEQDTGVLMGGIQADQSISFQAMRGKLQDFMKIIRDDPAVNNVTGFTGGSRVNSGMMFITLKPRGERKETAQQVIDRLRVKLAKEPGARLFLMAVQDIRVGGRQANASYQYTLLSDSLAALREWEPKIRKALSALPQLADVNSDQQDNGAEMNLIYDRDTMSRLGIDVQAANSLLNNAFGQRQISTIYQPMNQYKVVMEVDPRYTQDISALEKMFVINRDGKAIPLSYFAQWRPANAPLSVNHQGLSAASTIAFNLPTGTSLSQATEAINRTMTQLGVPPTVRGSFSGTAQVFQQTMNSQLILIVAAIATVYIVLGILYESYVHPLTILSTLPSAGVGALLALELFNAPFSLIALIGIMLLIGIVKKNAIMMVDFALEAQRSGGLTPEQAIFQACLLRFRPIMMTTLAALFGALPLVLSDGDGSELRQPLGITIVGGLVMSQLLTLYTTPVVYLFFDRLRLRFSRKNSKPVVEI</sequence>
<reference key="1">
    <citation type="journal article" date="2011" name="J. Bacteriol.">
        <title>Comparative genomics of 28 Salmonella enterica isolates: evidence for CRISPR-mediated adaptive sublineage evolution.</title>
        <authorList>
            <person name="Fricke W.F."/>
            <person name="Mammel M.K."/>
            <person name="McDermott P.F."/>
            <person name="Tartera C."/>
            <person name="White D.G."/>
            <person name="Leclerc J.E."/>
            <person name="Ravel J."/>
            <person name="Cebula T.A."/>
        </authorList>
    </citation>
    <scope>NUCLEOTIDE SEQUENCE [LARGE SCALE GENOMIC DNA]</scope>
    <source>
        <strain>SL476</strain>
    </source>
</reference>
<organism>
    <name type="scientific">Salmonella heidelberg (strain SL476)</name>
    <dbReference type="NCBI Taxonomy" id="454169"/>
    <lineage>
        <taxon>Bacteria</taxon>
        <taxon>Pseudomonadati</taxon>
        <taxon>Pseudomonadota</taxon>
        <taxon>Gammaproteobacteria</taxon>
        <taxon>Enterobacterales</taxon>
        <taxon>Enterobacteriaceae</taxon>
        <taxon>Salmonella</taxon>
    </lineage>
</organism>
<keyword id="KW-0997">Cell inner membrane</keyword>
<keyword id="KW-1003">Cell membrane</keyword>
<keyword id="KW-0472">Membrane</keyword>
<keyword id="KW-0812">Transmembrane</keyword>
<keyword id="KW-1133">Transmembrane helix</keyword>
<keyword id="KW-0813">Transport</keyword>
<protein>
    <recommendedName>
        <fullName evidence="1">Multidrug resistance protein MdtC</fullName>
    </recommendedName>
    <alternativeName>
        <fullName evidence="1">Multidrug transporter MdtC</fullName>
    </alternativeName>
</protein>
<accession>B4T9U2</accession>
<evidence type="ECO:0000255" key="1">
    <source>
        <dbReference type="HAMAP-Rule" id="MF_01424"/>
    </source>
</evidence>
<proteinExistence type="inferred from homology"/>
<gene>
    <name evidence="1" type="primary">mdtC</name>
    <name type="ordered locus">SeHA_C2358</name>
</gene>